<accession>P97378</accession>
<accession>B9EHD9</accession>
<evidence type="ECO:0000250" key="1"/>
<evidence type="ECO:0000250" key="2">
    <source>
        <dbReference type="UniProtKB" id="Q99665"/>
    </source>
</evidence>
<evidence type="ECO:0000255" key="3"/>
<evidence type="ECO:0000255" key="4">
    <source>
        <dbReference type="PROSITE-ProRule" id="PRU00316"/>
    </source>
</evidence>
<evidence type="ECO:0000269" key="5">
    <source>
    </source>
</evidence>
<evidence type="ECO:0000269" key="6">
    <source>
    </source>
</evidence>
<evidence type="ECO:0000305" key="7"/>
<evidence type="ECO:0007829" key="8">
    <source>
        <dbReference type="PDB" id="8PB1"/>
    </source>
</evidence>
<proteinExistence type="evidence at protein level"/>
<comment type="function">
    <text evidence="5">Receptor for interleukin-12. This subunit is the signaling component coupling to the JAK2/STAT4 pathway. Promotes the proliferation of T-cells as well as NK cells. Induces the promotion of T-cells towards the Th1 phenotype by strongly enhancing IFN-gamma production. Can also activate STAT3.</text>
</comment>
<comment type="subunit">
    <text evidence="1">Heterodimer/heterooligomer; disulfide-linked. The functional high affinity IL12 receptor is composed of I12RB1 and IL12RB2. Il12RB2 binds JAK2 (via its N-terminal) through a membrane-proximal region of the cytoplasmic domain (By similarity).</text>
</comment>
<comment type="interaction">
    <interactant intactId="EBI-6253448">
        <id>P97378</id>
    </interactant>
    <interactant intactId="EBI-7652906">
        <id>Q99KY4</id>
        <label>Gak</label>
    </interactant>
    <organismsDiffer>false</organismsDiffer>
    <experiments>7</experiments>
</comment>
<comment type="subcellular location">
    <subcellularLocation>
        <location>Membrane</location>
        <topology>Single-pass type I membrane protein</topology>
    </subcellularLocation>
</comment>
<comment type="tissue specificity">
    <text>Expressed in developing T-helper (TH) cells.</text>
</comment>
<comment type="developmental stage">
    <text evidence="6">Expressed at high levels in Th1 cells on day 3, 5 and 7 after primary activation. Very low expression in Th2 cells on day 3 and not detectable on day 5 nor day 7 after activation.</text>
</comment>
<comment type="induction">
    <text>Following T-cell activation, expression inhibited by IL4 and induced by IFN gamma.</text>
</comment>
<comment type="domain">
    <text>The WSXWS motif appears to be necessary for proper protein folding and thereby efficient intracellular transport and cell-surface receptor binding.</text>
</comment>
<comment type="domain">
    <text>The box 1 motif is required for JAK interaction and/or activation.</text>
</comment>
<comment type="PTM">
    <text>On IL12 stimulation, phosphorylated on C-terminal tyrosine residues. Phosphorylation of any one of Tyr-757, Tyr-804 or Tyr-811 can activate STAT4, IFN-gamma production, and T-cell proliferation. Tyr-811 is the dominant site of cell proliferation.</text>
</comment>
<comment type="miscellaneous">
    <text>Lps-defective mice C57BL/10ScCr (Cr) mice carry a mutation in the IL12RB2 gene leading to the production of a truncated IL12 receptor beta 2 chain resulting in malfunction of the IL12-mediated IFN-gamma response.</text>
</comment>
<comment type="similarity">
    <text evidence="7">Belongs to the type I cytokine receptor family. Type 2 subfamily.</text>
</comment>
<gene>
    <name type="primary">Il12rb2</name>
</gene>
<sequence>MAQTVRECSLALLFLFMWLLIKANIDVCKLGTVTVQPAPVIPLGSAANISCSLNPKQGCSHYPSSNELILLKFVNDVLVENLHGKKVHDHTGHSSTFQVTNLSLGMTLFVCKLNCSNSQKKPPVPVCGVEISVGVAPEPPQNISCVQEGENGTVACSWNSGKVTYLKTNYTLQLSGPNNLTCQKQCFSDNRQNCNRLDLGINLSPDLAESRFIVRVTAINDLGNSSSLPHTFTFLDIVIPLPPWDIRINFLNASGSRGTLQWEDEGQVVLNQLRYQPLNSTSWNMVNATNAKGKYDLRDLRPFTEYEFQISSKLHLSGGSWSNWSESLRTRTPEEEPVGILDIWYMKQDIDYDRQQISLFWKSLNPSEARGKILHYQVTLQEVTKKTTLQNTTRHTSWTRVIPRTGAWTASVSAANSKGASAPTHINIVDLCGTGLLAPHQVSAKSENMDNILVTWQPPKKADSAVREYIVEWRALQPGSITKFPPHWLRIPPDNMSALISENIKPYICYEIRVHALSESQGGCSSIRGDSKHKAPVSGPHITAITEKKERLFISWTHIPFPEQRGCILHYRIYWKERDSTAQPELCEIQYRRSQNSHPISSLQPRVTYVLWMTAVTAAGESPQGNEREFCPQGKANWKAFVISSICIAIITVGTFSIRYFRQKAFTLLSTLKPQWYSRTIPDPANSTWVKKYPILEEKIQLPTDNLLMAWPTPEEPEPLIIHEVLYHMIPVVRQPYYFKRGQGFQGYSTSKQDAMYIANPQATGTLTAETRQLVNLYKVLESRDPDSKLANLTSPLTVTPVNYLPSHEGYLPSNIEDLSPHEADPTDSFDLEHQHISLSIFASSSLRPLIFGGERLTLDRLKMGYDSLMSNEA</sequence>
<organism>
    <name type="scientific">Mus musculus</name>
    <name type="common">Mouse</name>
    <dbReference type="NCBI Taxonomy" id="10090"/>
    <lineage>
        <taxon>Eukaryota</taxon>
        <taxon>Metazoa</taxon>
        <taxon>Chordata</taxon>
        <taxon>Craniata</taxon>
        <taxon>Vertebrata</taxon>
        <taxon>Euteleostomi</taxon>
        <taxon>Mammalia</taxon>
        <taxon>Eutheria</taxon>
        <taxon>Euarchontoglires</taxon>
        <taxon>Glires</taxon>
        <taxon>Rodentia</taxon>
        <taxon>Myomorpha</taxon>
        <taxon>Muroidea</taxon>
        <taxon>Muridae</taxon>
        <taxon>Murinae</taxon>
        <taxon>Mus</taxon>
        <taxon>Mus</taxon>
    </lineage>
</organism>
<dbReference type="EMBL" id="U64199">
    <property type="protein sequence ID" value="AAB36676.1"/>
    <property type="molecule type" value="mRNA"/>
</dbReference>
<dbReference type="EMBL" id="BC137745">
    <property type="protein sequence ID" value="AAI37746.1"/>
    <property type="molecule type" value="mRNA"/>
</dbReference>
<dbReference type="CCDS" id="CCDS20220.1"/>
<dbReference type="RefSeq" id="NP_001298070.1">
    <property type="nucleotide sequence ID" value="NM_001311141.1"/>
</dbReference>
<dbReference type="RefSeq" id="NP_032380.1">
    <property type="nucleotide sequence ID" value="NM_008354.4"/>
</dbReference>
<dbReference type="RefSeq" id="XP_006505680.1">
    <property type="nucleotide sequence ID" value="XM_006505617.5"/>
</dbReference>
<dbReference type="PDB" id="8ODZ">
    <property type="method" value="EM"/>
    <property type="resolution" value="3.60 A"/>
    <property type="chains" value="D=24-637"/>
</dbReference>
<dbReference type="PDB" id="8OE0">
    <property type="method" value="EM"/>
    <property type="resolution" value="4.60 A"/>
    <property type="chains" value="D=24-637"/>
</dbReference>
<dbReference type="PDB" id="8PB1">
    <property type="method" value="EM"/>
    <property type="resolution" value="3.50 A"/>
    <property type="chains" value="D=24-637"/>
</dbReference>
<dbReference type="PDBsum" id="8ODZ"/>
<dbReference type="PDBsum" id="8OE0"/>
<dbReference type="PDBsum" id="8PB1"/>
<dbReference type="EMDB" id="EMD-16822"/>
<dbReference type="EMDB" id="EMD-16823"/>
<dbReference type="SMR" id="P97378"/>
<dbReference type="BioGRID" id="200612">
    <property type="interactions" value="1"/>
</dbReference>
<dbReference type="ComplexPortal" id="CPX-388">
    <property type="entry name" value="Interleukin-12-receptor complex"/>
</dbReference>
<dbReference type="FunCoup" id="P97378">
    <property type="interactions" value="408"/>
</dbReference>
<dbReference type="IntAct" id="P97378">
    <property type="interactions" value="3"/>
</dbReference>
<dbReference type="MINT" id="P97378"/>
<dbReference type="STRING" id="10090.ENSMUSP00000010605"/>
<dbReference type="GlyCosmos" id="P97378">
    <property type="glycosylation" value="14 sites, No reported glycans"/>
</dbReference>
<dbReference type="GlyGen" id="P97378">
    <property type="glycosylation" value="15 sites"/>
</dbReference>
<dbReference type="PhosphoSitePlus" id="P97378"/>
<dbReference type="PaxDb" id="10090-ENSMUSP00000010605"/>
<dbReference type="Antibodypedia" id="19617">
    <property type="antibodies" value="367 antibodies from 35 providers"/>
</dbReference>
<dbReference type="DNASU" id="16162"/>
<dbReference type="Ensembl" id="ENSMUST00000018485.4">
    <property type="protein sequence ID" value="ENSMUSP00000010605.4"/>
    <property type="gene ID" value="ENSMUSG00000018341.13"/>
</dbReference>
<dbReference type="GeneID" id="16162"/>
<dbReference type="KEGG" id="mmu:16162"/>
<dbReference type="UCSC" id="uc009cfo.1">
    <property type="organism name" value="mouse"/>
</dbReference>
<dbReference type="AGR" id="MGI:1270861"/>
<dbReference type="CTD" id="3595"/>
<dbReference type="MGI" id="MGI:1270861">
    <property type="gene designation" value="Il12rb2"/>
</dbReference>
<dbReference type="VEuPathDB" id="HostDB:ENSMUSG00000018341"/>
<dbReference type="eggNOG" id="ENOG502QRRE">
    <property type="taxonomic scope" value="Eukaryota"/>
</dbReference>
<dbReference type="GeneTree" id="ENSGT00940000159829"/>
<dbReference type="HOGENOM" id="CLU_016653_0_0_1"/>
<dbReference type="InParanoid" id="P97378"/>
<dbReference type="OMA" id="KWAKECT"/>
<dbReference type="OrthoDB" id="10005435at2759"/>
<dbReference type="PhylomeDB" id="P97378"/>
<dbReference type="TreeFam" id="TF338122"/>
<dbReference type="Reactome" id="R-MMU-8984722">
    <property type="pathway name" value="Interleukin-35 Signalling"/>
</dbReference>
<dbReference type="Reactome" id="R-MMU-9020591">
    <property type="pathway name" value="Interleukin-12 signaling"/>
</dbReference>
<dbReference type="BioGRID-ORCS" id="16162">
    <property type="hits" value="6 hits in 78 CRISPR screens"/>
</dbReference>
<dbReference type="ChiTaRS" id="Il12rb2">
    <property type="organism name" value="mouse"/>
</dbReference>
<dbReference type="PRO" id="PR:P97378"/>
<dbReference type="Proteomes" id="UP000000589">
    <property type="component" value="Chromosome 6"/>
</dbReference>
<dbReference type="RNAct" id="P97378">
    <property type="molecule type" value="protein"/>
</dbReference>
<dbReference type="Bgee" id="ENSMUSG00000018341">
    <property type="expression patterns" value="Expressed in animal zygote and 39 other cell types or tissues"/>
</dbReference>
<dbReference type="ExpressionAtlas" id="P97378">
    <property type="expression patterns" value="baseline and differential"/>
</dbReference>
<dbReference type="GO" id="GO:0009897">
    <property type="term" value="C:external side of plasma membrane"/>
    <property type="evidence" value="ECO:0000314"/>
    <property type="project" value="MGI"/>
</dbReference>
<dbReference type="GO" id="GO:0005886">
    <property type="term" value="C:plasma membrane"/>
    <property type="evidence" value="ECO:0000304"/>
    <property type="project" value="Reactome"/>
</dbReference>
<dbReference type="GO" id="GO:0015026">
    <property type="term" value="F:coreceptor activity"/>
    <property type="evidence" value="ECO:0007669"/>
    <property type="project" value="Ensembl"/>
</dbReference>
<dbReference type="GO" id="GO:0004896">
    <property type="term" value="F:cytokine receptor activity"/>
    <property type="evidence" value="ECO:0007669"/>
    <property type="project" value="InterPro"/>
</dbReference>
<dbReference type="GO" id="GO:0019901">
    <property type="term" value="F:protein kinase binding"/>
    <property type="evidence" value="ECO:0000353"/>
    <property type="project" value="MGI"/>
</dbReference>
<dbReference type="GO" id="GO:0035722">
    <property type="term" value="P:interleukin-12-mediated signaling pathway"/>
    <property type="evidence" value="ECO:0007669"/>
    <property type="project" value="Ensembl"/>
</dbReference>
<dbReference type="GO" id="GO:0032729">
    <property type="term" value="P:positive regulation of type II interferon production"/>
    <property type="evidence" value="ECO:0007669"/>
    <property type="project" value="Ensembl"/>
</dbReference>
<dbReference type="GO" id="GO:0034097">
    <property type="term" value="P:response to cytokine"/>
    <property type="evidence" value="ECO:0000315"/>
    <property type="project" value="MGI"/>
</dbReference>
<dbReference type="GO" id="GO:0032496">
    <property type="term" value="P:response to lipopolysaccharide"/>
    <property type="evidence" value="ECO:0000316"/>
    <property type="project" value="MGI"/>
</dbReference>
<dbReference type="CDD" id="cd00063">
    <property type="entry name" value="FN3"/>
    <property type="match status" value="3"/>
</dbReference>
<dbReference type="FunFam" id="2.60.40.10:FF:000789">
    <property type="entry name" value="Interleukin 12 receptor subunit beta 2"/>
    <property type="match status" value="1"/>
</dbReference>
<dbReference type="FunFam" id="2.60.40.10:FF:000875">
    <property type="entry name" value="Interleukin 12 receptor subunit beta 2"/>
    <property type="match status" value="1"/>
</dbReference>
<dbReference type="FunFam" id="2.60.40.10:FF:001079">
    <property type="entry name" value="Interleukin 12 receptor subunit beta 2"/>
    <property type="match status" value="1"/>
</dbReference>
<dbReference type="FunFam" id="2.60.40.10:FF:000862">
    <property type="entry name" value="interleukin-12 receptor subunit beta-2 isoform X1"/>
    <property type="match status" value="1"/>
</dbReference>
<dbReference type="FunFam" id="2.60.40.10:FF:001068">
    <property type="entry name" value="interleukin-12 receptor subunit beta-2 isoform X1"/>
    <property type="match status" value="1"/>
</dbReference>
<dbReference type="Gene3D" id="2.60.40.10">
    <property type="entry name" value="Immunoglobulins"/>
    <property type="match status" value="5"/>
</dbReference>
<dbReference type="InterPro" id="IPR003961">
    <property type="entry name" value="FN3_dom"/>
</dbReference>
<dbReference type="InterPro" id="IPR036116">
    <property type="entry name" value="FN3_sf"/>
</dbReference>
<dbReference type="InterPro" id="IPR003529">
    <property type="entry name" value="Hematopoietin_rcpt_Gp130_CS"/>
</dbReference>
<dbReference type="InterPro" id="IPR013783">
    <property type="entry name" value="Ig-like_fold"/>
</dbReference>
<dbReference type="InterPro" id="IPR010457">
    <property type="entry name" value="IgC2-like_lig-bd"/>
</dbReference>
<dbReference type="InterPro" id="IPR052672">
    <property type="entry name" value="Type1_Cytokine_Rcpt_Type2"/>
</dbReference>
<dbReference type="PANTHER" id="PTHR48423">
    <property type="entry name" value="INTERLEUKIN-27 RECEPTOR SUBUNIT ALPHA"/>
    <property type="match status" value="1"/>
</dbReference>
<dbReference type="PANTHER" id="PTHR48423:SF1">
    <property type="entry name" value="INTERLEUKIN-27 RECEPTOR SUBUNIT ALPHA"/>
    <property type="match status" value="1"/>
</dbReference>
<dbReference type="Pfam" id="PF00041">
    <property type="entry name" value="fn3"/>
    <property type="match status" value="2"/>
</dbReference>
<dbReference type="Pfam" id="PF06328">
    <property type="entry name" value="Lep_receptor_Ig"/>
    <property type="match status" value="1"/>
</dbReference>
<dbReference type="SMART" id="SM00060">
    <property type="entry name" value="FN3"/>
    <property type="match status" value="4"/>
</dbReference>
<dbReference type="SUPFAM" id="SSF49265">
    <property type="entry name" value="Fibronectin type III"/>
    <property type="match status" value="4"/>
</dbReference>
<dbReference type="PROSITE" id="PS50853">
    <property type="entry name" value="FN3"/>
    <property type="match status" value="4"/>
</dbReference>
<dbReference type="PROSITE" id="PS01353">
    <property type="entry name" value="HEMATOPO_REC_L_F2"/>
    <property type="match status" value="1"/>
</dbReference>
<reference key="1">
    <citation type="journal article" date="1996" name="Proc. Natl. Acad. Sci. U.S.A.">
        <title>A functional interleukin 12 receptor complex is composed of two beta-type cytokine receptor subunits.</title>
        <authorList>
            <person name="Presky D.H."/>
            <person name="Yang H."/>
            <person name="Minetti L.J."/>
            <person name="Chua A.O."/>
            <person name="Nabavi N."/>
            <person name="Wu C.-Y."/>
            <person name="Gately M.K."/>
            <person name="Gubler U."/>
        </authorList>
    </citation>
    <scope>NUCLEOTIDE SEQUENCE [MRNA]</scope>
</reference>
<reference key="2">
    <citation type="journal article" date="2004" name="Genome Res.">
        <title>The status, quality, and expansion of the NIH full-length cDNA project: the Mammalian Gene Collection (MGC).</title>
        <authorList>
            <consortium name="The MGC Project Team"/>
        </authorList>
    </citation>
    <scope>NUCLEOTIDE SEQUENCE [LARGE SCALE MRNA]</scope>
    <source>
        <tissue>Thymus</tissue>
    </source>
</reference>
<reference key="3">
    <citation type="submission" date="2007-04" db="UniProtKB">
        <authorList>
            <person name="Lubec G."/>
            <person name="Kang S.U."/>
        </authorList>
    </citation>
    <scope>PROTEIN SEQUENCE OF 692-699</scope>
    <scope>IDENTIFICATION BY MASS SPECTROMETRY</scope>
    <source>
        <strain>C57BL/6J</strain>
        <tissue>Brain</tissue>
    </source>
</reference>
<reference key="4">
    <citation type="journal article" date="2002" name="J. Immunol.">
        <title>Activated STAT4 has an essential role in Th1 differentiation and proliferation that is independent of its role in the maintenance of IL-12R beta 2 chain expression and signaling.</title>
        <authorList>
            <person name="Nishikomori R."/>
            <person name="Usui T."/>
            <person name="Wu C.-Y."/>
            <person name="Morinobu A."/>
            <person name="O'Shea J.J."/>
            <person name="Strober W."/>
        </authorList>
    </citation>
    <scope>FUNCTION IN STAT3/STAT4 ACTIVATION</scope>
    <scope>MUTAGENESIS OF TYR-677; TYR-693; TYR-727; TYR-737; TYR-748; TYR-757; TYR-778; TYR-804; TYR-811 AND TYR-866</scope>
</reference>
<reference key="5">
    <citation type="journal article" date="1997" name="J. Exp. Med.">
        <title>Regulation of the interleukin (IL)-12R beta 2 subunit expression in developing T helper 1 (Th1) and Th2 cells.</title>
        <authorList>
            <person name="Szabo S.J."/>
            <person name="Dighe A.S."/>
            <person name="Gubler U."/>
            <person name="Murphy K.M."/>
        </authorList>
    </citation>
    <scope>DEVELOPMENTAL STAGE</scope>
</reference>
<reference key="6">
    <citation type="journal article" date="2001" name="J. Immunol.">
        <title>A point mutation in the IL-12R beta 2 gene underlies the IL-12 unresponsiveness of Lps-defective C57BL/10ScCr mice.</title>
        <authorList>
            <person name="Poltorak A."/>
            <person name="Merlin T."/>
            <person name="Nielsen P.J."/>
            <person name="Sandra O."/>
            <person name="Smirnova I."/>
            <person name="Schupp I."/>
            <person name="Boehm T."/>
            <person name="Galanos C."/>
            <person name="Freudenberg M.A."/>
        </authorList>
    </citation>
    <scope>IL12 UNRESPONSIVENESS IN CR MUTANT MICE</scope>
</reference>
<name>I12R2_MOUSE</name>
<feature type="signal peptide" evidence="3">
    <location>
        <begin position="1"/>
        <end position="23"/>
    </location>
</feature>
<feature type="chain" id="PRO_0000010921" description="Interleukin-12 receptor subunit beta-2">
    <location>
        <begin position="24"/>
        <end position="874"/>
    </location>
</feature>
<feature type="topological domain" description="Extracellular" evidence="3">
    <location>
        <begin position="24"/>
        <end position="637"/>
    </location>
</feature>
<feature type="transmembrane region" description="Helical" evidence="3">
    <location>
        <begin position="638"/>
        <end position="658"/>
    </location>
</feature>
<feature type="topological domain" description="Cytoplasmic" evidence="3">
    <location>
        <begin position="659"/>
        <end position="874"/>
    </location>
</feature>
<feature type="domain" description="Fibronectin type-III 1" evidence="4">
    <location>
        <begin position="139"/>
        <end position="237"/>
    </location>
</feature>
<feature type="domain" description="Fibronectin type-III 2" evidence="4">
    <location>
        <begin position="242"/>
        <end position="335"/>
    </location>
</feature>
<feature type="domain" description="Fibronectin type-III 3" evidence="4">
    <location>
        <begin position="336"/>
        <end position="430"/>
    </location>
</feature>
<feature type="domain" description="Fibronectin type-III 4" evidence="4">
    <location>
        <begin position="438"/>
        <end position="530"/>
    </location>
</feature>
<feature type="domain" description="Fibronectin type-III 5" evidence="4">
    <location>
        <begin position="536"/>
        <end position="635"/>
    </location>
</feature>
<feature type="short sequence motif" description="WSXWS motif">
    <location>
        <begin position="321"/>
        <end position="325"/>
    </location>
</feature>
<feature type="short sequence motif" description="Box 1 motif">
    <location>
        <begin position="677"/>
        <end position="685"/>
    </location>
</feature>
<feature type="modified residue" description="Phosphotyrosine" evidence="7">
    <location>
        <position position="757"/>
    </location>
</feature>
<feature type="modified residue" description="Phosphotyrosine" evidence="7">
    <location>
        <position position="804"/>
    </location>
</feature>
<feature type="modified residue" description="Phosphotyrosine" evidence="2 7">
    <location>
        <position position="811"/>
    </location>
</feature>
<feature type="glycosylation site" description="N-linked (GlcNAc...) asparagine" evidence="3">
    <location>
        <position position="48"/>
    </location>
</feature>
<feature type="glycosylation site" description="N-linked (GlcNAc...) asparagine" evidence="3">
    <location>
        <position position="101"/>
    </location>
</feature>
<feature type="glycosylation site" description="N-linked (GlcNAc...) asparagine" evidence="3">
    <location>
        <position position="114"/>
    </location>
</feature>
<feature type="glycosylation site" description="N-linked (GlcNAc...) asparagine" evidence="3">
    <location>
        <position position="142"/>
    </location>
</feature>
<feature type="glycosylation site" description="N-linked (GlcNAc...) asparagine" evidence="3">
    <location>
        <position position="151"/>
    </location>
</feature>
<feature type="glycosylation site" description="N-linked (GlcNAc...) asparagine" evidence="3">
    <location>
        <position position="169"/>
    </location>
</feature>
<feature type="glycosylation site" description="N-linked (GlcNAc...) asparagine" evidence="3">
    <location>
        <position position="179"/>
    </location>
</feature>
<feature type="glycosylation site" description="N-linked (GlcNAc...) asparagine" evidence="3">
    <location>
        <position position="224"/>
    </location>
</feature>
<feature type="glycosylation site" description="N-linked (GlcNAc...) asparagine" evidence="3">
    <location>
        <position position="252"/>
    </location>
</feature>
<feature type="glycosylation site" description="N-linked (GlcNAc...) asparagine" evidence="3">
    <location>
        <position position="279"/>
    </location>
</feature>
<feature type="glycosylation site" description="N-linked (GlcNAc...) asparagine" evidence="3">
    <location>
        <position position="287"/>
    </location>
</feature>
<feature type="glycosylation site" description="N-linked (GlcNAc...) asparagine" evidence="3">
    <location>
        <position position="323"/>
    </location>
</feature>
<feature type="glycosylation site" description="N-linked (GlcNAc...) asparagine" evidence="3">
    <location>
        <position position="391"/>
    </location>
</feature>
<feature type="glycosylation site" description="N-linked (GlcNAc...) asparagine" evidence="3">
    <location>
        <position position="495"/>
    </location>
</feature>
<feature type="mutagenesis site" description="No loss of IL12-induced STAT4 activation nor T-cell proliferation. No effect on IFN-gamma production." evidence="5">
    <original>Y</original>
    <variation>F</variation>
    <location>
        <position position="677"/>
    </location>
</feature>
<feature type="mutagenesis site" description="No loss of IL12-induced STAT4 activation nor T-cell proliferation. No effect on IFN-gamma production." evidence="5">
    <original>Y</original>
    <variation>F</variation>
    <location>
        <position position="693"/>
    </location>
</feature>
<feature type="mutagenesis site" description="No loss of IL12-induced STAT4 activation nor T-cell proliferation. No effect on IFN-gamma production." evidence="5">
    <original>Y</original>
    <variation>F</variation>
    <location>
        <position position="727"/>
    </location>
</feature>
<feature type="mutagenesis site" description="No loss of IL12-induced STAT4 activation nor T-cell proliferation. No effect on IFN-gamma production." evidence="5">
    <original>Y</original>
    <variation>F</variation>
    <location>
        <position position="737"/>
    </location>
</feature>
<feature type="mutagenesis site" description="No loss of IL12-induced STAT4 activation nor T-cell proliferation. No effect on IFN-gamma production." evidence="5">
    <original>Y</original>
    <variation>F</variation>
    <location>
        <position position="748"/>
    </location>
</feature>
<feature type="mutagenesis site" description="No loss of IL12-induced STAT4 activation nor T-cell proliferation. No effect on IFN-gamma production." evidence="5">
    <original>Y</original>
    <variation>F</variation>
    <location>
        <position position="757"/>
    </location>
</feature>
<feature type="mutagenesis site" description="No loss of IL12-induced STAT4 activation nor T-cell proliferation. No effect on IFN-gamma production." evidence="5">
    <original>Y</original>
    <variation>F</variation>
    <location>
        <position position="778"/>
    </location>
</feature>
<feature type="mutagenesis site" description="No loss of IL12-induced STAT4 activation nor T-cell proliferation. No effect on IFN-gamma production." evidence="5">
    <original>Y</original>
    <variation>F</variation>
    <location>
        <position position="804"/>
    </location>
</feature>
<feature type="mutagenesis site" description="No loss of IL12-induced STAT4 activation. Greatly reduced IL12-induced T-cell proliferation and IFN-gamma production." evidence="5">
    <original>Y</original>
    <variation>F</variation>
    <location>
        <position position="811"/>
    </location>
</feature>
<feature type="mutagenesis site" description="No loss of IL12-induced STAT4 activation nor T-cell proliferation. No effect on IFN-gamma production." evidence="5">
    <original>Y</original>
    <variation>F</variation>
    <location>
        <position position="866"/>
    </location>
</feature>
<feature type="strand" evidence="8">
    <location>
        <begin position="30"/>
        <end position="37"/>
    </location>
</feature>
<feature type="strand" evidence="8">
    <location>
        <begin position="39"/>
        <end position="42"/>
    </location>
</feature>
<feature type="strand" evidence="8">
    <location>
        <begin position="47"/>
        <end position="53"/>
    </location>
</feature>
<feature type="strand" evidence="8">
    <location>
        <begin position="69"/>
        <end position="74"/>
    </location>
</feature>
<feature type="strand" evidence="8">
    <location>
        <begin position="77"/>
        <end position="81"/>
    </location>
</feature>
<feature type="helix" evidence="8">
    <location>
        <begin position="90"/>
        <end position="92"/>
    </location>
</feature>
<feature type="strand" evidence="8">
    <location>
        <begin position="94"/>
        <end position="99"/>
    </location>
</feature>
<feature type="strand" evidence="8">
    <location>
        <begin position="107"/>
        <end position="112"/>
    </location>
</feature>
<feature type="strand" evidence="8">
    <location>
        <begin position="125"/>
        <end position="134"/>
    </location>
</feature>
<feature type="strand" evidence="8">
    <location>
        <begin position="141"/>
        <end position="148"/>
    </location>
</feature>
<feature type="turn" evidence="8">
    <location>
        <begin position="149"/>
        <end position="152"/>
    </location>
</feature>
<feature type="strand" evidence="8">
    <location>
        <begin position="153"/>
        <end position="159"/>
    </location>
</feature>
<feature type="strand" evidence="8">
    <location>
        <begin position="168"/>
        <end position="176"/>
    </location>
</feature>
<feature type="turn" evidence="8">
    <location>
        <begin position="177"/>
        <end position="179"/>
    </location>
</feature>
<feature type="strand" evidence="8">
    <location>
        <begin position="180"/>
        <end position="191"/>
    </location>
</feature>
<feature type="strand" evidence="8">
    <location>
        <begin position="195"/>
        <end position="198"/>
    </location>
</feature>
<feature type="strand" evidence="8">
    <location>
        <begin position="211"/>
        <end position="220"/>
    </location>
</feature>
<feature type="strand" evidence="8">
    <location>
        <begin position="223"/>
        <end position="225"/>
    </location>
</feature>
<feature type="strand" evidence="8">
    <location>
        <begin position="230"/>
        <end position="233"/>
    </location>
</feature>
<protein>
    <recommendedName>
        <fullName>Interleukin-12 receptor subunit beta-2</fullName>
        <shortName>IL-12 receptor subunit beta-2</shortName>
        <shortName>IL-12R subunit beta-2</shortName>
        <shortName>IL-12R-beta-2</shortName>
        <shortName>IL-12RB2</shortName>
    </recommendedName>
</protein>
<keyword id="KW-0002">3D-structure</keyword>
<keyword id="KW-0903">Direct protein sequencing</keyword>
<keyword id="KW-1015">Disulfide bond</keyword>
<keyword id="KW-0325">Glycoprotein</keyword>
<keyword id="KW-0472">Membrane</keyword>
<keyword id="KW-0597">Phosphoprotein</keyword>
<keyword id="KW-0675">Receptor</keyword>
<keyword id="KW-1185">Reference proteome</keyword>
<keyword id="KW-0677">Repeat</keyword>
<keyword id="KW-0732">Signal</keyword>
<keyword id="KW-0812">Transmembrane</keyword>
<keyword id="KW-1133">Transmembrane helix</keyword>